<reference key="1">
    <citation type="journal article" date="2004" name="Nature">
        <title>Genome evolution in yeasts.</title>
        <authorList>
            <person name="Dujon B."/>
            <person name="Sherman D."/>
            <person name="Fischer G."/>
            <person name="Durrens P."/>
            <person name="Casaregola S."/>
            <person name="Lafontaine I."/>
            <person name="de Montigny J."/>
            <person name="Marck C."/>
            <person name="Neuveglise C."/>
            <person name="Talla E."/>
            <person name="Goffard N."/>
            <person name="Frangeul L."/>
            <person name="Aigle M."/>
            <person name="Anthouard V."/>
            <person name="Babour A."/>
            <person name="Barbe V."/>
            <person name="Barnay S."/>
            <person name="Blanchin S."/>
            <person name="Beckerich J.-M."/>
            <person name="Beyne E."/>
            <person name="Bleykasten C."/>
            <person name="Boisrame A."/>
            <person name="Boyer J."/>
            <person name="Cattolico L."/>
            <person name="Confanioleri F."/>
            <person name="de Daruvar A."/>
            <person name="Despons L."/>
            <person name="Fabre E."/>
            <person name="Fairhead C."/>
            <person name="Ferry-Dumazet H."/>
            <person name="Groppi A."/>
            <person name="Hantraye F."/>
            <person name="Hennequin C."/>
            <person name="Jauniaux N."/>
            <person name="Joyet P."/>
            <person name="Kachouri R."/>
            <person name="Kerrest A."/>
            <person name="Koszul R."/>
            <person name="Lemaire M."/>
            <person name="Lesur I."/>
            <person name="Ma L."/>
            <person name="Muller H."/>
            <person name="Nicaud J.-M."/>
            <person name="Nikolski M."/>
            <person name="Oztas S."/>
            <person name="Ozier-Kalogeropoulos O."/>
            <person name="Pellenz S."/>
            <person name="Potier S."/>
            <person name="Richard G.-F."/>
            <person name="Straub M.-L."/>
            <person name="Suleau A."/>
            <person name="Swennen D."/>
            <person name="Tekaia F."/>
            <person name="Wesolowski-Louvel M."/>
            <person name="Westhof E."/>
            <person name="Wirth B."/>
            <person name="Zeniou-Meyer M."/>
            <person name="Zivanovic Y."/>
            <person name="Bolotin-Fukuhara M."/>
            <person name="Thierry A."/>
            <person name="Bouchier C."/>
            <person name="Caudron B."/>
            <person name="Scarpelli C."/>
            <person name="Gaillardin C."/>
            <person name="Weissenbach J."/>
            <person name="Wincker P."/>
            <person name="Souciet J.-L."/>
        </authorList>
    </citation>
    <scope>NUCLEOTIDE SEQUENCE [LARGE SCALE GENOMIC DNA]</scope>
    <source>
        <strain>ATCC 2001 / BCRC 20586 / JCM 3761 / NBRC 0622 / NRRL Y-65 / CBS 138</strain>
    </source>
</reference>
<keyword id="KW-0106">Calcium</keyword>
<keyword id="KW-0479">Metal-binding</keyword>
<keyword id="KW-1185">Reference proteome</keyword>
<keyword id="KW-0677">Repeat</keyword>
<dbReference type="EMBL" id="CR380958">
    <property type="protein sequence ID" value="CAG61770.1"/>
    <property type="molecule type" value="Genomic_DNA"/>
</dbReference>
<dbReference type="RefSeq" id="XP_448800.1">
    <property type="nucleotide sequence ID" value="XM_448800.1"/>
</dbReference>
<dbReference type="SMR" id="Q6FLU4"/>
<dbReference type="FunCoup" id="Q6FLU4">
    <property type="interactions" value="890"/>
</dbReference>
<dbReference type="STRING" id="284593.Q6FLU4"/>
<dbReference type="EnsemblFungi" id="CAGL0L00605g-T">
    <property type="protein sequence ID" value="CAGL0L00605g-T-p1"/>
    <property type="gene ID" value="CAGL0L00605g"/>
</dbReference>
<dbReference type="GeneID" id="2890566"/>
<dbReference type="KEGG" id="cgr:2890566"/>
<dbReference type="CGD" id="CAL0135884">
    <property type="gene designation" value="CNB1"/>
</dbReference>
<dbReference type="VEuPathDB" id="FungiDB:B1J91_L00605g"/>
<dbReference type="VEuPathDB" id="FungiDB:CAGL0L00605g"/>
<dbReference type="eggNOG" id="KOG0034">
    <property type="taxonomic scope" value="Eukaryota"/>
</dbReference>
<dbReference type="HOGENOM" id="CLU_061288_10_1_1"/>
<dbReference type="InParanoid" id="Q6FLU4"/>
<dbReference type="OMA" id="DTNFDRD"/>
<dbReference type="PHI-base" id="PHI:2560"/>
<dbReference type="Proteomes" id="UP000002428">
    <property type="component" value="Chromosome L"/>
</dbReference>
<dbReference type="GO" id="GO:0005955">
    <property type="term" value="C:calcineurin complex"/>
    <property type="evidence" value="ECO:0007669"/>
    <property type="project" value="EnsemblFungi"/>
</dbReference>
<dbReference type="GO" id="GO:0032153">
    <property type="term" value="C:cell division site"/>
    <property type="evidence" value="ECO:0007669"/>
    <property type="project" value="EnsemblFungi"/>
</dbReference>
<dbReference type="GO" id="GO:0005737">
    <property type="term" value="C:cytoplasm"/>
    <property type="evidence" value="ECO:0007669"/>
    <property type="project" value="EnsemblFungi"/>
</dbReference>
<dbReference type="GO" id="GO:0005509">
    <property type="term" value="F:calcium ion binding"/>
    <property type="evidence" value="ECO:0007669"/>
    <property type="project" value="InterPro"/>
</dbReference>
<dbReference type="GO" id="GO:0019211">
    <property type="term" value="F:phosphatase activator activity"/>
    <property type="evidence" value="ECO:0007669"/>
    <property type="project" value="EnsemblFungi"/>
</dbReference>
<dbReference type="GO" id="GO:0051701">
    <property type="term" value="P:biological process involved in interaction with host"/>
    <property type="evidence" value="ECO:0000315"/>
    <property type="project" value="CGD"/>
</dbReference>
<dbReference type="GO" id="GO:0055074">
    <property type="term" value="P:calcium ion homeostasis"/>
    <property type="evidence" value="ECO:0000315"/>
    <property type="project" value="CGD"/>
</dbReference>
<dbReference type="GO" id="GO:0070370">
    <property type="term" value="P:cellular heat acclimation"/>
    <property type="evidence" value="ECO:0000315"/>
    <property type="project" value="CGD"/>
</dbReference>
<dbReference type="GO" id="GO:0031505">
    <property type="term" value="P:fungal-type cell wall organization"/>
    <property type="evidence" value="ECO:0000315"/>
    <property type="project" value="CGD"/>
</dbReference>
<dbReference type="GO" id="GO:0006402">
    <property type="term" value="P:mRNA catabolic process"/>
    <property type="evidence" value="ECO:0000315"/>
    <property type="project" value="CGD"/>
</dbReference>
<dbReference type="GO" id="GO:0022604">
    <property type="term" value="P:regulation of cell morphogenesis"/>
    <property type="evidence" value="ECO:0007669"/>
    <property type="project" value="EnsemblFungi"/>
</dbReference>
<dbReference type="GO" id="GO:0034976">
    <property type="term" value="P:response to endoplasmic reticulum stress"/>
    <property type="evidence" value="ECO:0000315"/>
    <property type="project" value="CGD"/>
</dbReference>
<dbReference type="CDD" id="cd00051">
    <property type="entry name" value="EFh"/>
    <property type="match status" value="1"/>
</dbReference>
<dbReference type="FunFam" id="1.10.238.10:FF:000047">
    <property type="entry name" value="Calcineurin subunit B type 1"/>
    <property type="match status" value="1"/>
</dbReference>
<dbReference type="Gene3D" id="1.10.238.10">
    <property type="entry name" value="EF-hand"/>
    <property type="match status" value="1"/>
</dbReference>
<dbReference type="InterPro" id="IPR011992">
    <property type="entry name" value="EF-hand-dom_pair"/>
</dbReference>
<dbReference type="InterPro" id="IPR018247">
    <property type="entry name" value="EF_Hand_1_Ca_BS"/>
</dbReference>
<dbReference type="InterPro" id="IPR002048">
    <property type="entry name" value="EF_hand_dom"/>
</dbReference>
<dbReference type="PANTHER" id="PTHR45942">
    <property type="entry name" value="PROTEIN PHOSPATASE 3 REGULATORY SUBUNIT B ALPHA ISOFORM TYPE 1"/>
    <property type="match status" value="1"/>
</dbReference>
<dbReference type="Pfam" id="PF13499">
    <property type="entry name" value="EF-hand_7"/>
    <property type="match status" value="2"/>
</dbReference>
<dbReference type="SMART" id="SM00054">
    <property type="entry name" value="EFh"/>
    <property type="match status" value="4"/>
</dbReference>
<dbReference type="SUPFAM" id="SSF47473">
    <property type="entry name" value="EF-hand"/>
    <property type="match status" value="1"/>
</dbReference>
<dbReference type="PROSITE" id="PS00018">
    <property type="entry name" value="EF_HAND_1"/>
    <property type="match status" value="4"/>
</dbReference>
<dbReference type="PROSITE" id="PS50222">
    <property type="entry name" value="EF_HAND_2"/>
    <property type="match status" value="4"/>
</dbReference>
<gene>
    <name type="primary">CNB1</name>
    <name type="ordered locus">CAGL0L00605g</name>
</gene>
<feature type="chain" id="PRO_0000073491" description="Calcineurin subunit B">
    <location>
        <begin position="1"/>
        <end position="175"/>
    </location>
</feature>
<feature type="domain" description="EF-hand 1" evidence="2">
    <location>
        <begin position="21"/>
        <end position="56"/>
    </location>
</feature>
<feature type="domain" description="EF-hand 2" evidence="2">
    <location>
        <begin position="60"/>
        <end position="88"/>
    </location>
</feature>
<feature type="domain" description="EF-hand 3" evidence="2">
    <location>
        <begin position="90"/>
        <end position="125"/>
    </location>
</feature>
<feature type="domain" description="EF-hand 4" evidence="2">
    <location>
        <begin position="131"/>
        <end position="166"/>
    </location>
</feature>
<feature type="binding site" evidence="2">
    <location>
        <position position="34"/>
    </location>
    <ligand>
        <name>Ca(2+)</name>
        <dbReference type="ChEBI" id="CHEBI:29108"/>
        <label>1</label>
    </ligand>
</feature>
<feature type="binding site" evidence="2">
    <location>
        <position position="36"/>
    </location>
    <ligand>
        <name>Ca(2+)</name>
        <dbReference type="ChEBI" id="CHEBI:29108"/>
        <label>1</label>
    </ligand>
</feature>
<feature type="binding site" evidence="2">
    <location>
        <position position="38"/>
    </location>
    <ligand>
        <name>Ca(2+)</name>
        <dbReference type="ChEBI" id="CHEBI:29108"/>
        <label>1</label>
    </ligand>
</feature>
<feature type="binding site" evidence="2">
    <location>
        <position position="40"/>
    </location>
    <ligand>
        <name>Ca(2+)</name>
        <dbReference type="ChEBI" id="CHEBI:29108"/>
        <label>1</label>
    </ligand>
</feature>
<feature type="binding site" evidence="2">
    <location>
        <position position="45"/>
    </location>
    <ligand>
        <name>Ca(2+)</name>
        <dbReference type="ChEBI" id="CHEBI:29108"/>
        <label>1</label>
    </ligand>
</feature>
<feature type="binding site" evidence="2">
    <location>
        <position position="66"/>
    </location>
    <ligand>
        <name>Ca(2+)</name>
        <dbReference type="ChEBI" id="CHEBI:29108"/>
        <label>2</label>
    </ligand>
</feature>
<feature type="binding site" evidence="2">
    <location>
        <position position="68"/>
    </location>
    <ligand>
        <name>Ca(2+)</name>
        <dbReference type="ChEBI" id="CHEBI:29108"/>
        <label>2</label>
    </ligand>
</feature>
<feature type="binding site" evidence="2">
    <location>
        <position position="70"/>
    </location>
    <ligand>
        <name>Ca(2+)</name>
        <dbReference type="ChEBI" id="CHEBI:29108"/>
        <label>2</label>
    </ligand>
</feature>
<feature type="binding site" evidence="2">
    <location>
        <position position="72"/>
    </location>
    <ligand>
        <name>Ca(2+)</name>
        <dbReference type="ChEBI" id="CHEBI:29108"/>
        <label>2</label>
    </ligand>
</feature>
<feature type="binding site" evidence="2">
    <location>
        <position position="77"/>
    </location>
    <ligand>
        <name>Ca(2+)</name>
        <dbReference type="ChEBI" id="CHEBI:29108"/>
        <label>2</label>
    </ligand>
</feature>
<feature type="binding site" evidence="2">
    <location>
        <position position="103"/>
    </location>
    <ligand>
        <name>Ca(2+)</name>
        <dbReference type="ChEBI" id="CHEBI:29108"/>
        <label>3</label>
    </ligand>
</feature>
<feature type="binding site" evidence="2">
    <location>
        <position position="105"/>
    </location>
    <ligand>
        <name>Ca(2+)</name>
        <dbReference type="ChEBI" id="CHEBI:29108"/>
        <label>3</label>
    </ligand>
</feature>
<feature type="binding site" evidence="2">
    <location>
        <position position="107"/>
    </location>
    <ligand>
        <name>Ca(2+)</name>
        <dbReference type="ChEBI" id="CHEBI:29108"/>
        <label>3</label>
    </ligand>
</feature>
<feature type="binding site" evidence="2">
    <location>
        <position position="114"/>
    </location>
    <ligand>
        <name>Ca(2+)</name>
        <dbReference type="ChEBI" id="CHEBI:29108"/>
        <label>3</label>
    </ligand>
</feature>
<feature type="binding site" evidence="2">
    <location>
        <position position="144"/>
    </location>
    <ligand>
        <name>Ca(2+)</name>
        <dbReference type="ChEBI" id="CHEBI:29108"/>
        <label>4</label>
    </ligand>
</feature>
<feature type="binding site" evidence="2">
    <location>
        <position position="146"/>
    </location>
    <ligand>
        <name>Ca(2+)</name>
        <dbReference type="ChEBI" id="CHEBI:29108"/>
        <label>4</label>
    </ligand>
</feature>
<feature type="binding site" evidence="2">
    <location>
        <position position="148"/>
    </location>
    <ligand>
        <name>Ca(2+)</name>
        <dbReference type="ChEBI" id="CHEBI:29108"/>
        <label>4</label>
    </ligand>
</feature>
<feature type="binding site" evidence="2">
    <location>
        <position position="150"/>
    </location>
    <ligand>
        <name>Ca(2+)</name>
        <dbReference type="ChEBI" id="CHEBI:29108"/>
        <label>4</label>
    </ligand>
</feature>
<feature type="binding site" evidence="2">
    <location>
        <position position="155"/>
    </location>
    <ligand>
        <name>Ca(2+)</name>
        <dbReference type="ChEBI" id="CHEBI:29108"/>
        <label>4</label>
    </ligand>
</feature>
<protein>
    <recommendedName>
        <fullName>Calcineurin subunit B</fullName>
    </recommendedName>
    <alternativeName>
        <fullName>Calcineurin regulatory subunit</fullName>
    </alternativeName>
    <alternativeName>
        <fullName>Protein phosphatase 2B regulatory subunit</fullName>
    </alternativeName>
</protein>
<proteinExistence type="inferred from homology"/>
<organism>
    <name type="scientific">Candida glabrata (strain ATCC 2001 / BCRC 20586 / JCM 3761 / NBRC 0622 / NRRL Y-65 / CBS 138)</name>
    <name type="common">Yeast</name>
    <name type="synonym">Nakaseomyces glabratus</name>
    <dbReference type="NCBI Taxonomy" id="284593"/>
    <lineage>
        <taxon>Eukaryota</taxon>
        <taxon>Fungi</taxon>
        <taxon>Dikarya</taxon>
        <taxon>Ascomycota</taxon>
        <taxon>Saccharomycotina</taxon>
        <taxon>Saccharomycetes</taxon>
        <taxon>Saccharomycetales</taxon>
        <taxon>Saccharomycetaceae</taxon>
        <taxon>Nakaseomyces</taxon>
    </lineage>
</organism>
<accession>Q6FLU4</accession>
<comment type="function">
    <text evidence="1">Regulatory subunit of calcineurin, a calcium-dependent, calmodulin stimulated protein phosphatase. Confers calcium sensitivity (By similarity).</text>
</comment>
<comment type="subunit">
    <text evidence="1">Composed of a catalytic subunit (A) and a regulatory subunit (B).</text>
</comment>
<comment type="miscellaneous">
    <text evidence="1">This protein has four functional calcium-binding sites.</text>
</comment>
<comment type="similarity">
    <text evidence="3">Belongs to the calcineurin regulatory subunit family.</text>
</comment>
<evidence type="ECO:0000250" key="1"/>
<evidence type="ECO:0000255" key="2">
    <source>
        <dbReference type="PROSITE-ProRule" id="PRU00448"/>
    </source>
</evidence>
<evidence type="ECO:0000305" key="3"/>
<sequence>MGAAPSKIVETLLEDTNFDRDEIERLRKRFMKLDRDSSGSIDKNEFMSIPGVSANPLAGRIMEVFDADNSGDVDFQEFITGLSIFSGRGSKDEKLKFAFKIYDIDKDGLISNGELFIVLKIMVGSNLDDKQLQQIVDRTIMENDLDGDGQLSFEEFKSAIETTEVAKSLTLQYSV</sequence>
<name>CANB_CANGA</name>